<feature type="chain" id="PRO_0000050942" description="Pre-rRNA-processing protein crb3/ipi3">
    <location>
        <begin position="1"/>
        <end position="446"/>
    </location>
</feature>
<feature type="repeat" description="WD 1">
    <location>
        <begin position="74"/>
        <end position="113"/>
    </location>
</feature>
<feature type="repeat" description="WD 2">
    <location>
        <begin position="116"/>
        <end position="155"/>
    </location>
</feature>
<feature type="repeat" description="WD 3">
    <location>
        <begin position="172"/>
        <end position="214"/>
    </location>
</feature>
<feature type="repeat" description="WD 4">
    <location>
        <begin position="216"/>
        <end position="257"/>
    </location>
</feature>
<feature type="repeat" description="WD 5">
    <location>
        <begin position="294"/>
        <end position="333"/>
    </location>
</feature>
<gene>
    <name type="primary">crb3</name>
    <name type="synonym">ipi3</name>
    <name type="ORF">SPAC13G7.08c</name>
</gene>
<reference key="1">
    <citation type="journal article" date="1997" name="Genes Dev.">
        <title>Damage and replication checkpoint control in fission yeast is ensured by interactions of Crb2, a protein with BRCT motif, with Cut5 and Chk1.</title>
        <authorList>
            <person name="Saka Y."/>
            <person name="Esashi F."/>
            <person name="Matsusaka T."/>
            <person name="Mochida S."/>
            <person name="Yanagida M."/>
        </authorList>
    </citation>
    <scope>NUCLEOTIDE SEQUENCE [GENOMIC DNA]</scope>
</reference>
<reference key="2">
    <citation type="journal article" date="2002" name="Nature">
        <title>The genome sequence of Schizosaccharomyces pombe.</title>
        <authorList>
            <person name="Wood V."/>
            <person name="Gwilliam R."/>
            <person name="Rajandream M.A."/>
            <person name="Lyne M.H."/>
            <person name="Lyne R."/>
            <person name="Stewart A."/>
            <person name="Sgouros J.G."/>
            <person name="Peat N."/>
            <person name="Hayles J."/>
            <person name="Baker S.G."/>
            <person name="Basham D."/>
            <person name="Bowman S."/>
            <person name="Brooks K."/>
            <person name="Brown D."/>
            <person name="Brown S."/>
            <person name="Chillingworth T."/>
            <person name="Churcher C.M."/>
            <person name="Collins M."/>
            <person name="Connor R."/>
            <person name="Cronin A."/>
            <person name="Davis P."/>
            <person name="Feltwell T."/>
            <person name="Fraser A."/>
            <person name="Gentles S."/>
            <person name="Goble A."/>
            <person name="Hamlin N."/>
            <person name="Harris D.E."/>
            <person name="Hidalgo J."/>
            <person name="Hodgson G."/>
            <person name="Holroyd S."/>
            <person name="Hornsby T."/>
            <person name="Howarth S."/>
            <person name="Huckle E.J."/>
            <person name="Hunt S."/>
            <person name="Jagels K."/>
            <person name="James K.D."/>
            <person name="Jones L."/>
            <person name="Jones M."/>
            <person name="Leather S."/>
            <person name="McDonald S."/>
            <person name="McLean J."/>
            <person name="Mooney P."/>
            <person name="Moule S."/>
            <person name="Mungall K.L."/>
            <person name="Murphy L.D."/>
            <person name="Niblett D."/>
            <person name="Odell C."/>
            <person name="Oliver K."/>
            <person name="O'Neil S."/>
            <person name="Pearson D."/>
            <person name="Quail M.A."/>
            <person name="Rabbinowitsch E."/>
            <person name="Rutherford K.M."/>
            <person name="Rutter S."/>
            <person name="Saunders D."/>
            <person name="Seeger K."/>
            <person name="Sharp S."/>
            <person name="Skelton J."/>
            <person name="Simmonds M.N."/>
            <person name="Squares R."/>
            <person name="Squares S."/>
            <person name="Stevens K."/>
            <person name="Taylor K."/>
            <person name="Taylor R.G."/>
            <person name="Tivey A."/>
            <person name="Walsh S.V."/>
            <person name="Warren T."/>
            <person name="Whitehead S."/>
            <person name="Woodward J.R."/>
            <person name="Volckaert G."/>
            <person name="Aert R."/>
            <person name="Robben J."/>
            <person name="Grymonprez B."/>
            <person name="Weltjens I."/>
            <person name="Vanstreels E."/>
            <person name="Rieger M."/>
            <person name="Schaefer M."/>
            <person name="Mueller-Auer S."/>
            <person name="Gabel C."/>
            <person name="Fuchs M."/>
            <person name="Duesterhoeft A."/>
            <person name="Fritzc C."/>
            <person name="Holzer E."/>
            <person name="Moestl D."/>
            <person name="Hilbert H."/>
            <person name="Borzym K."/>
            <person name="Langer I."/>
            <person name="Beck A."/>
            <person name="Lehrach H."/>
            <person name="Reinhardt R."/>
            <person name="Pohl T.M."/>
            <person name="Eger P."/>
            <person name="Zimmermann W."/>
            <person name="Wedler H."/>
            <person name="Wambutt R."/>
            <person name="Purnelle B."/>
            <person name="Goffeau A."/>
            <person name="Cadieu E."/>
            <person name="Dreano S."/>
            <person name="Gloux S."/>
            <person name="Lelaure V."/>
            <person name="Mottier S."/>
            <person name="Galibert F."/>
            <person name="Aves S.J."/>
            <person name="Xiang Z."/>
            <person name="Hunt C."/>
            <person name="Moore K."/>
            <person name="Hurst S.M."/>
            <person name="Lucas M."/>
            <person name="Rochet M."/>
            <person name="Gaillardin C."/>
            <person name="Tallada V.A."/>
            <person name="Garzon A."/>
            <person name="Thode G."/>
            <person name="Daga R.R."/>
            <person name="Cruzado L."/>
            <person name="Jimenez J."/>
            <person name="Sanchez M."/>
            <person name="del Rey F."/>
            <person name="Benito J."/>
            <person name="Dominguez A."/>
            <person name="Revuelta J.L."/>
            <person name="Moreno S."/>
            <person name="Armstrong J."/>
            <person name="Forsburg S.L."/>
            <person name="Cerutti L."/>
            <person name="Lowe T."/>
            <person name="McCombie W.R."/>
            <person name="Paulsen I."/>
            <person name="Potashkin J."/>
            <person name="Shpakovski G.V."/>
            <person name="Ussery D."/>
            <person name="Barrell B.G."/>
            <person name="Nurse P."/>
        </authorList>
    </citation>
    <scope>NUCLEOTIDE SEQUENCE [LARGE SCALE GENOMIC DNA]</scope>
    <source>
        <strain>972 / ATCC 24843</strain>
    </source>
</reference>
<reference key="3">
    <citation type="journal article" date="2011" name="J. Biol. Chem.">
        <title>Roles of fission yeast Grc3 protein in ribosomal RNA processing and heterochromatic gene silencing.</title>
        <authorList>
            <person name="Kitano E."/>
            <person name="Hayashi A."/>
            <person name="Kanai D."/>
            <person name="Shinmyozu K."/>
            <person name="Nakayama J."/>
        </authorList>
    </citation>
    <scope>IDENTIFICATION BY MASS SPECTROMETRY</scope>
    <scope>INTERACTION WITH RIX1</scope>
    <scope>GRC3 AND LAS1</scope>
    <scope>SUBCELLULAR LOCATION</scope>
    <scope>FUNCTION</scope>
</reference>
<name>IPI3_SCHPO</name>
<evidence type="ECO:0000250" key="1">
    <source>
        <dbReference type="UniProtKB" id="P53877"/>
    </source>
</evidence>
<evidence type="ECO:0000269" key="2">
    <source>
    </source>
</evidence>
<evidence type="ECO:0000305" key="3"/>
<dbReference type="EMBL" id="AB008572">
    <property type="protein sequence ID" value="BAA23358.1"/>
    <property type="molecule type" value="Genomic_DNA"/>
</dbReference>
<dbReference type="EMBL" id="CU329670">
    <property type="protein sequence ID" value="CAA93596.1"/>
    <property type="molecule type" value="Genomic_DNA"/>
</dbReference>
<dbReference type="PIR" id="T37658">
    <property type="entry name" value="S67437"/>
</dbReference>
<dbReference type="RefSeq" id="NP_593710.1">
    <property type="nucleotide sequence ID" value="NM_001019141.2"/>
</dbReference>
<dbReference type="SMR" id="Q10272"/>
<dbReference type="BioGRID" id="279290">
    <property type="interactions" value="10"/>
</dbReference>
<dbReference type="FunCoup" id="Q10272">
    <property type="interactions" value="341"/>
</dbReference>
<dbReference type="IntAct" id="Q10272">
    <property type="interactions" value="3"/>
</dbReference>
<dbReference type="MINT" id="Q10272"/>
<dbReference type="STRING" id="284812.Q10272"/>
<dbReference type="iPTMnet" id="Q10272"/>
<dbReference type="PaxDb" id="4896-SPAC13G7.08c.1"/>
<dbReference type="EnsemblFungi" id="SPAC13G7.08c.1">
    <property type="protein sequence ID" value="SPAC13G7.08c.1:pep"/>
    <property type="gene ID" value="SPAC13G7.08c"/>
</dbReference>
<dbReference type="GeneID" id="2542844"/>
<dbReference type="KEGG" id="spo:2542844"/>
<dbReference type="PomBase" id="SPAC13G7.08c">
    <property type="gene designation" value="crb3"/>
</dbReference>
<dbReference type="VEuPathDB" id="FungiDB:SPAC13G7.08c"/>
<dbReference type="eggNOG" id="KOG0646">
    <property type="taxonomic scope" value="Eukaryota"/>
</dbReference>
<dbReference type="HOGENOM" id="CLU_619884_0_0_1"/>
<dbReference type="InParanoid" id="Q10272"/>
<dbReference type="OMA" id="GVNARIY"/>
<dbReference type="PhylomeDB" id="Q10272"/>
<dbReference type="Reactome" id="R-SPO-6791226">
    <property type="pathway name" value="Major pathway of rRNA processing in the nucleolus and cytosol"/>
</dbReference>
<dbReference type="PRO" id="PR:Q10272"/>
<dbReference type="Proteomes" id="UP000002485">
    <property type="component" value="Chromosome I"/>
</dbReference>
<dbReference type="GO" id="GO:0032153">
    <property type="term" value="C:cell division site"/>
    <property type="evidence" value="ECO:0007005"/>
    <property type="project" value="PomBase"/>
</dbReference>
<dbReference type="GO" id="GO:0005829">
    <property type="term" value="C:cytosol"/>
    <property type="evidence" value="ECO:0007005"/>
    <property type="project" value="PomBase"/>
</dbReference>
<dbReference type="GO" id="GO:0000792">
    <property type="term" value="C:heterochromatin"/>
    <property type="evidence" value="ECO:0000314"/>
    <property type="project" value="PomBase"/>
</dbReference>
<dbReference type="GO" id="GO:0005656">
    <property type="term" value="C:nuclear pre-replicative complex"/>
    <property type="evidence" value="ECO:0000318"/>
    <property type="project" value="GO_Central"/>
</dbReference>
<dbReference type="GO" id="GO:0005634">
    <property type="term" value="C:nucleus"/>
    <property type="evidence" value="ECO:0007005"/>
    <property type="project" value="PomBase"/>
</dbReference>
<dbReference type="GO" id="GO:0120330">
    <property type="term" value="C:rixosome complex"/>
    <property type="evidence" value="ECO:0000314"/>
    <property type="project" value="PomBase"/>
</dbReference>
<dbReference type="GO" id="GO:0006261">
    <property type="term" value="P:DNA-templated DNA replication"/>
    <property type="evidence" value="ECO:0000318"/>
    <property type="project" value="GO_Central"/>
</dbReference>
<dbReference type="GO" id="GO:0006364">
    <property type="term" value="P:rRNA processing"/>
    <property type="evidence" value="ECO:0000315"/>
    <property type="project" value="PomBase"/>
</dbReference>
<dbReference type="Gene3D" id="2.130.10.10">
    <property type="entry name" value="YVTN repeat-like/Quinoprotein amine dehydrogenase"/>
    <property type="match status" value="2"/>
</dbReference>
<dbReference type="InterPro" id="IPR020472">
    <property type="entry name" value="G-protein_beta_WD-40_rep"/>
</dbReference>
<dbReference type="InterPro" id="IPR015943">
    <property type="entry name" value="WD40/YVTN_repeat-like_dom_sf"/>
</dbReference>
<dbReference type="InterPro" id="IPR019775">
    <property type="entry name" value="WD40_repeat_CS"/>
</dbReference>
<dbReference type="InterPro" id="IPR036322">
    <property type="entry name" value="WD40_repeat_dom_sf"/>
</dbReference>
<dbReference type="InterPro" id="IPR001680">
    <property type="entry name" value="WD40_rpt"/>
</dbReference>
<dbReference type="InterPro" id="IPR045227">
    <property type="entry name" value="WDR18/Ipi3/RID3"/>
</dbReference>
<dbReference type="PANTHER" id="PTHR18763:SF0">
    <property type="entry name" value="WD REPEAT-CONTAINING PROTEIN 18"/>
    <property type="match status" value="1"/>
</dbReference>
<dbReference type="PANTHER" id="PTHR18763">
    <property type="entry name" value="WD-REPEAT PROTEIN 18"/>
    <property type="match status" value="1"/>
</dbReference>
<dbReference type="Pfam" id="PF00400">
    <property type="entry name" value="WD40"/>
    <property type="match status" value="4"/>
</dbReference>
<dbReference type="PRINTS" id="PR00320">
    <property type="entry name" value="GPROTEINBRPT"/>
</dbReference>
<dbReference type="SMART" id="SM00320">
    <property type="entry name" value="WD40"/>
    <property type="match status" value="4"/>
</dbReference>
<dbReference type="SUPFAM" id="SSF50978">
    <property type="entry name" value="WD40 repeat-like"/>
    <property type="match status" value="1"/>
</dbReference>
<dbReference type="PROSITE" id="PS00678">
    <property type="entry name" value="WD_REPEATS_1"/>
    <property type="match status" value="2"/>
</dbReference>
<dbReference type="PROSITE" id="PS50082">
    <property type="entry name" value="WD_REPEATS_2"/>
    <property type="match status" value="3"/>
</dbReference>
<dbReference type="PROSITE" id="PS50294">
    <property type="entry name" value="WD_REPEATS_REGION"/>
    <property type="match status" value="2"/>
</dbReference>
<accession>Q10272</accession>
<organism>
    <name type="scientific">Schizosaccharomyces pombe (strain 972 / ATCC 24843)</name>
    <name type="common">Fission yeast</name>
    <dbReference type="NCBI Taxonomy" id="284812"/>
    <lineage>
        <taxon>Eukaryota</taxon>
        <taxon>Fungi</taxon>
        <taxon>Dikarya</taxon>
        <taxon>Ascomycota</taxon>
        <taxon>Taphrinomycotina</taxon>
        <taxon>Schizosaccharomycetes</taxon>
        <taxon>Schizosaccharomycetales</taxon>
        <taxon>Schizosaccharomycetaceae</taxon>
        <taxon>Schizosaccharomyces</taxon>
    </lineage>
</organism>
<protein>
    <recommendedName>
        <fullName>Pre-rRNA-processing protein crb3/ipi3</fullName>
    </recommendedName>
</protein>
<comment type="function">
    <text evidence="2">Required for both pre-rRNA processing and heterochromatic gene silencing.</text>
</comment>
<comment type="function">
    <text evidence="1">Component of the RIX1 complex required for processing of ITS2 sequences from 35S pre-rRNA.</text>
</comment>
<comment type="subunit">
    <text evidence="1 2">Component of the RIX1 complex, composed of ipi1, rix1/ipi2 and crb3/ipi3 in a 1:2:2 stoichiometry. The complex interacts (via rix1) with mdn1 (via its hexameric AAA ATPase ring) and the pre-60S ribosome particles (By similarity). Interacts with rix1, gcr3 and Las1 (PubMed:21385875).</text>
</comment>
<comment type="subcellular location">
    <subcellularLocation>
        <location evidence="2">Nucleus</location>
    </subcellularLocation>
    <subcellularLocation>
        <location evidence="2">Chromosome</location>
    </subcellularLocation>
</comment>
<comment type="similarity">
    <text evidence="3">Belongs to the WD repeat IPI3/WDR18 family.</text>
</comment>
<sequence>MELLLSGCEAIEGEPSNVLCHNLHTGTLVSTFRQSSPAKNATCTTLNHLLSAQHTRPQLNIHNFGKEILDQSIILPEILICVQSSPCGSWLAAGTEKGNLYIWSLKSGALIYFFRAHYQPLTILKFSNDGMVLFTASNDGDVFAWLISTLVDQNSTFETSNSSVKAISHFSGHKRSIVSMEIGPGPIVSGRLYTASEDNTIRIWDVSTGNLLTTIALPSTPSCMTVDPSERVVYVGNEKGIIWIPLYTGSSTFSNNVKEKKRVTSVDNTTIPNAIGGMGRVVDYNDSRESSIISCQSPITTLTVSFDASLLISGDKDGNVLVWDSVSRQVLRRLVQYYSPVSFLQCKVDKISFYSNSSLSFPVLKRMITNEYLNSDVRICIQDDGVEQLMQPENILKISSDIVTQGSESSWRAKAETSEMQLKEAKRLFYELKQIHQALWEKYLQK</sequence>
<keyword id="KW-0158">Chromosome</keyword>
<keyword id="KW-0539">Nucleus</keyword>
<keyword id="KW-1185">Reference proteome</keyword>
<keyword id="KW-0677">Repeat</keyword>
<keyword id="KW-0690">Ribosome biogenesis</keyword>
<keyword id="KW-0698">rRNA processing</keyword>
<keyword id="KW-0804">Transcription</keyword>
<keyword id="KW-0805">Transcription regulation</keyword>
<keyword id="KW-0853">WD repeat</keyword>
<proteinExistence type="evidence at protein level"/>